<proteinExistence type="inferred from homology"/>
<feature type="chain" id="PRO_0000055289" description="Histone H2A-III">
    <location>
        <begin position="1"/>
        <end position="129"/>
    </location>
</feature>
<comment type="function">
    <text>Core component of nucleosome. Nucleosomes wrap and compact DNA into chromatin, limiting DNA accessibility to the cellular machineries which require DNA as a template. Histones thereby play a central role in transcription regulation, DNA repair, DNA replication and chromosomal stability. DNA accessibility is regulated via a complex set of post-translational modifications of histones, also called histone code, and nucleosome remodeling.</text>
</comment>
<comment type="subunit">
    <text>The nucleosome is a histone octamer containing two molecules each of H2A, H2B, H3 and H4 assembled in one H3-H4 heterotetramer and two H2A-H2B heterodimers. The octamer wraps approximately 147 bp of DNA.</text>
</comment>
<comment type="subcellular location">
    <subcellularLocation>
        <location>Nucleus</location>
    </subcellularLocation>
    <subcellularLocation>
        <location>Chromosome</location>
    </subcellularLocation>
</comment>
<comment type="similarity">
    <text evidence="1">Belongs to the histone H2A family.</text>
</comment>
<reference key="1">
    <citation type="journal article" date="1990" name="Gene">
        <title>Organization and transcription of Volvox histone-encoding genes: similarities between algal and animal genes.</title>
        <authorList>
            <person name="Mueller K."/>
            <person name="Lindauer A."/>
            <person name="Bruederlein M."/>
            <person name="Schmitt R."/>
        </authorList>
    </citation>
    <scope>NUCLEOTIDE SEQUENCE [GENOMIC DNA]</scope>
    <source>
        <strain>f. Nagariensis / HK10</strain>
    </source>
</reference>
<evidence type="ECO:0000305" key="1"/>
<protein>
    <recommendedName>
        <fullName>Histone H2A-III</fullName>
    </recommendedName>
</protein>
<accession>P16865</accession>
<name>H2A3_VOLCA</name>
<organism>
    <name type="scientific">Volvox carteri</name>
    <name type="common">Green alga</name>
    <dbReference type="NCBI Taxonomy" id="3067"/>
    <lineage>
        <taxon>Eukaryota</taxon>
        <taxon>Viridiplantae</taxon>
        <taxon>Chlorophyta</taxon>
        <taxon>core chlorophytes</taxon>
        <taxon>Chlorophyceae</taxon>
        <taxon>CS clade</taxon>
        <taxon>Chlamydomonadales</taxon>
        <taxon>Volvocaceae</taxon>
        <taxon>Volvox</taxon>
    </lineage>
</organism>
<sequence>MAGRGKGKTAGKKAVSRSAKAGLQFPVGRIARYLKKGKYAERIGAGAPVYLAAVLEYLTAEVLELAGNAARDNKKNRIVPRHIQLAIRNDEELGKLLGDVTIASGGVLPNIHAVLLPKKSKGGKGEEAA</sequence>
<keyword id="KW-0158">Chromosome</keyword>
<keyword id="KW-0238">DNA-binding</keyword>
<keyword id="KW-0544">Nucleosome core</keyword>
<keyword id="KW-0539">Nucleus</keyword>
<dbReference type="EMBL" id="M31921">
    <property type="protein sequence ID" value="AAA34247.1"/>
    <property type="molecule type" value="Genomic_DNA"/>
</dbReference>
<dbReference type="PIR" id="JQ0794">
    <property type="entry name" value="JQ0794"/>
</dbReference>
<dbReference type="SMR" id="P16865"/>
<dbReference type="OMA" id="HYSKRVG"/>
<dbReference type="GO" id="GO:0000786">
    <property type="term" value="C:nucleosome"/>
    <property type="evidence" value="ECO:0007669"/>
    <property type="project" value="UniProtKB-KW"/>
</dbReference>
<dbReference type="GO" id="GO:0005634">
    <property type="term" value="C:nucleus"/>
    <property type="evidence" value="ECO:0007669"/>
    <property type="project" value="UniProtKB-SubCell"/>
</dbReference>
<dbReference type="GO" id="GO:0003677">
    <property type="term" value="F:DNA binding"/>
    <property type="evidence" value="ECO:0007669"/>
    <property type="project" value="UniProtKB-KW"/>
</dbReference>
<dbReference type="GO" id="GO:0046982">
    <property type="term" value="F:protein heterodimerization activity"/>
    <property type="evidence" value="ECO:0007669"/>
    <property type="project" value="InterPro"/>
</dbReference>
<dbReference type="GO" id="GO:0030527">
    <property type="term" value="F:structural constituent of chromatin"/>
    <property type="evidence" value="ECO:0007669"/>
    <property type="project" value="InterPro"/>
</dbReference>
<dbReference type="CDD" id="cd00074">
    <property type="entry name" value="HFD_H2A"/>
    <property type="match status" value="1"/>
</dbReference>
<dbReference type="FunFam" id="1.10.20.10:FF:000009">
    <property type="entry name" value="Histone H2A"/>
    <property type="match status" value="1"/>
</dbReference>
<dbReference type="Gene3D" id="1.10.20.10">
    <property type="entry name" value="Histone, subunit A"/>
    <property type="match status" value="1"/>
</dbReference>
<dbReference type="InterPro" id="IPR009072">
    <property type="entry name" value="Histone-fold"/>
</dbReference>
<dbReference type="InterPro" id="IPR002119">
    <property type="entry name" value="Histone_H2A"/>
</dbReference>
<dbReference type="InterPro" id="IPR007125">
    <property type="entry name" value="Histone_H2A/H2B/H3"/>
</dbReference>
<dbReference type="InterPro" id="IPR032454">
    <property type="entry name" value="Histone_H2A_C"/>
</dbReference>
<dbReference type="InterPro" id="IPR032458">
    <property type="entry name" value="Histone_H2A_CS"/>
</dbReference>
<dbReference type="PANTHER" id="PTHR23430">
    <property type="entry name" value="HISTONE H2A"/>
    <property type="match status" value="1"/>
</dbReference>
<dbReference type="Pfam" id="PF00125">
    <property type="entry name" value="Histone"/>
    <property type="match status" value="1"/>
</dbReference>
<dbReference type="Pfam" id="PF16211">
    <property type="entry name" value="Histone_H2A_C"/>
    <property type="match status" value="1"/>
</dbReference>
<dbReference type="PRINTS" id="PR00620">
    <property type="entry name" value="HISTONEH2A"/>
</dbReference>
<dbReference type="SMART" id="SM00414">
    <property type="entry name" value="H2A"/>
    <property type="match status" value="1"/>
</dbReference>
<dbReference type="SUPFAM" id="SSF47113">
    <property type="entry name" value="Histone-fold"/>
    <property type="match status" value="1"/>
</dbReference>
<dbReference type="PROSITE" id="PS00046">
    <property type="entry name" value="HISTONE_H2A"/>
    <property type="match status" value="1"/>
</dbReference>